<sequence length="334" mass="36673">MIDPRLPLTDIHRHLDGNIRAQTILDLGQQFNLNLPANELDTLRPHVQITKTEPDLVSFLQKLDWGVAVLGSLDACRRVAYENVEDAAHAGLHYAELRFSPFYMAMKHQLPITGVVEAVIDGIASGCRDFNIDIRLIGILSRTFGEQACLQELDSLLAHREGITALDLAGDELGFPGSLFRRHFNRARDAGLRITVHAGEAAGPESIWQAIRELGAERIGHGVKAVEDRKLMDYLAEHKIGIESCLTSNIQTSTVVSLATHPLATFLRHGIVASINTDDPAVQGIEIAHEYLVAAPAAGLTPHEIRQAQANGLEMAFISEQEKQALRDKVFPIS</sequence>
<organism>
    <name type="scientific">Yersinia pseudotuberculosis serotype O:3 (strain YPIII)</name>
    <dbReference type="NCBI Taxonomy" id="502800"/>
    <lineage>
        <taxon>Bacteria</taxon>
        <taxon>Pseudomonadati</taxon>
        <taxon>Pseudomonadota</taxon>
        <taxon>Gammaproteobacteria</taxon>
        <taxon>Enterobacterales</taxon>
        <taxon>Yersiniaceae</taxon>
        <taxon>Yersinia</taxon>
    </lineage>
</organism>
<evidence type="ECO:0000255" key="1">
    <source>
        <dbReference type="HAMAP-Rule" id="MF_00540"/>
    </source>
</evidence>
<feature type="chain" id="PRO_1000128875" description="Adenosine deaminase">
    <location>
        <begin position="1"/>
        <end position="334"/>
    </location>
</feature>
<feature type="active site" description="Proton donor" evidence="1">
    <location>
        <position position="200"/>
    </location>
</feature>
<feature type="binding site" evidence="1">
    <location>
        <position position="12"/>
    </location>
    <ligand>
        <name>Zn(2+)</name>
        <dbReference type="ChEBI" id="CHEBI:29105"/>
        <note>catalytic</note>
    </ligand>
</feature>
<feature type="binding site" evidence="1">
    <location>
        <position position="14"/>
    </location>
    <ligand>
        <name>substrate</name>
    </ligand>
</feature>
<feature type="binding site" evidence="1">
    <location>
        <position position="14"/>
    </location>
    <ligand>
        <name>Zn(2+)</name>
        <dbReference type="ChEBI" id="CHEBI:29105"/>
        <note>catalytic</note>
    </ligand>
</feature>
<feature type="binding site" evidence="1">
    <location>
        <position position="16"/>
    </location>
    <ligand>
        <name>substrate</name>
    </ligand>
</feature>
<feature type="binding site" evidence="1">
    <location>
        <position position="170"/>
    </location>
    <ligand>
        <name>substrate</name>
    </ligand>
</feature>
<feature type="binding site" evidence="1">
    <location>
        <position position="197"/>
    </location>
    <ligand>
        <name>Zn(2+)</name>
        <dbReference type="ChEBI" id="CHEBI:29105"/>
        <note>catalytic</note>
    </ligand>
</feature>
<feature type="binding site" evidence="1">
    <location>
        <position position="278"/>
    </location>
    <ligand>
        <name>Zn(2+)</name>
        <dbReference type="ChEBI" id="CHEBI:29105"/>
        <note>catalytic</note>
    </ligand>
</feature>
<feature type="binding site" evidence="1">
    <location>
        <position position="279"/>
    </location>
    <ligand>
        <name>substrate</name>
    </ligand>
</feature>
<feature type="site" description="Important for catalytic activity" evidence="1">
    <location>
        <position position="221"/>
    </location>
</feature>
<protein>
    <recommendedName>
        <fullName evidence="1">Adenosine deaminase</fullName>
        <ecNumber evidence="1">3.5.4.4</ecNumber>
    </recommendedName>
    <alternativeName>
        <fullName evidence="1">Adenosine aminohydrolase</fullName>
    </alternativeName>
</protein>
<keyword id="KW-0378">Hydrolase</keyword>
<keyword id="KW-0479">Metal-binding</keyword>
<keyword id="KW-0546">Nucleotide metabolism</keyword>
<keyword id="KW-0862">Zinc</keyword>
<dbReference type="EC" id="3.5.4.4" evidence="1"/>
<dbReference type="EMBL" id="CP000950">
    <property type="protein sequence ID" value="ACA68280.1"/>
    <property type="molecule type" value="Genomic_DNA"/>
</dbReference>
<dbReference type="RefSeq" id="WP_012105088.1">
    <property type="nucleotide sequence ID" value="NZ_CP009792.1"/>
</dbReference>
<dbReference type="SMR" id="B1JKL9"/>
<dbReference type="KEGG" id="ypy:YPK_1993"/>
<dbReference type="PATRIC" id="fig|502800.11.peg.2667"/>
<dbReference type="GO" id="GO:0005829">
    <property type="term" value="C:cytosol"/>
    <property type="evidence" value="ECO:0007669"/>
    <property type="project" value="TreeGrafter"/>
</dbReference>
<dbReference type="GO" id="GO:0046936">
    <property type="term" value="F:2'-deoxyadenosine deaminase activity"/>
    <property type="evidence" value="ECO:0007669"/>
    <property type="project" value="RHEA"/>
</dbReference>
<dbReference type="GO" id="GO:0004000">
    <property type="term" value="F:adenosine deaminase activity"/>
    <property type="evidence" value="ECO:0007669"/>
    <property type="project" value="UniProtKB-UniRule"/>
</dbReference>
<dbReference type="GO" id="GO:0008270">
    <property type="term" value="F:zinc ion binding"/>
    <property type="evidence" value="ECO:0007669"/>
    <property type="project" value="UniProtKB-UniRule"/>
</dbReference>
<dbReference type="GO" id="GO:0006154">
    <property type="term" value="P:adenosine catabolic process"/>
    <property type="evidence" value="ECO:0007669"/>
    <property type="project" value="TreeGrafter"/>
</dbReference>
<dbReference type="GO" id="GO:0043103">
    <property type="term" value="P:hypoxanthine salvage"/>
    <property type="evidence" value="ECO:0007669"/>
    <property type="project" value="TreeGrafter"/>
</dbReference>
<dbReference type="GO" id="GO:0046103">
    <property type="term" value="P:inosine biosynthetic process"/>
    <property type="evidence" value="ECO:0007669"/>
    <property type="project" value="TreeGrafter"/>
</dbReference>
<dbReference type="GO" id="GO:0009117">
    <property type="term" value="P:nucleotide metabolic process"/>
    <property type="evidence" value="ECO:0007669"/>
    <property type="project" value="UniProtKB-KW"/>
</dbReference>
<dbReference type="GO" id="GO:0009168">
    <property type="term" value="P:purine ribonucleoside monophosphate biosynthetic process"/>
    <property type="evidence" value="ECO:0007669"/>
    <property type="project" value="UniProtKB-UniRule"/>
</dbReference>
<dbReference type="CDD" id="cd01320">
    <property type="entry name" value="ADA"/>
    <property type="match status" value="1"/>
</dbReference>
<dbReference type="FunFam" id="3.20.20.140:FF:000009">
    <property type="entry name" value="Adenosine deaminase"/>
    <property type="match status" value="1"/>
</dbReference>
<dbReference type="Gene3D" id="3.20.20.140">
    <property type="entry name" value="Metal-dependent hydrolases"/>
    <property type="match status" value="1"/>
</dbReference>
<dbReference type="HAMAP" id="MF_00540">
    <property type="entry name" value="A_deaminase"/>
    <property type="match status" value="1"/>
</dbReference>
<dbReference type="InterPro" id="IPR006650">
    <property type="entry name" value="A/AMP_deam_AS"/>
</dbReference>
<dbReference type="InterPro" id="IPR028893">
    <property type="entry name" value="A_deaminase"/>
</dbReference>
<dbReference type="InterPro" id="IPR001365">
    <property type="entry name" value="A_deaminase_dom"/>
</dbReference>
<dbReference type="InterPro" id="IPR006330">
    <property type="entry name" value="Ado/ade_deaminase"/>
</dbReference>
<dbReference type="InterPro" id="IPR032466">
    <property type="entry name" value="Metal_Hydrolase"/>
</dbReference>
<dbReference type="NCBIfam" id="TIGR01430">
    <property type="entry name" value="aden_deam"/>
    <property type="match status" value="1"/>
</dbReference>
<dbReference type="NCBIfam" id="NF006846">
    <property type="entry name" value="PRK09358.1-1"/>
    <property type="match status" value="1"/>
</dbReference>
<dbReference type="PANTHER" id="PTHR11409">
    <property type="entry name" value="ADENOSINE DEAMINASE"/>
    <property type="match status" value="1"/>
</dbReference>
<dbReference type="PANTHER" id="PTHR11409:SF43">
    <property type="entry name" value="ADENOSINE DEAMINASE"/>
    <property type="match status" value="1"/>
</dbReference>
<dbReference type="Pfam" id="PF00962">
    <property type="entry name" value="A_deaminase"/>
    <property type="match status" value="1"/>
</dbReference>
<dbReference type="SUPFAM" id="SSF51556">
    <property type="entry name" value="Metallo-dependent hydrolases"/>
    <property type="match status" value="1"/>
</dbReference>
<dbReference type="PROSITE" id="PS00485">
    <property type="entry name" value="A_DEAMINASE"/>
    <property type="match status" value="1"/>
</dbReference>
<proteinExistence type="inferred from homology"/>
<gene>
    <name evidence="1" type="primary">add</name>
    <name type="ordered locus">YPK_1993</name>
</gene>
<accession>B1JKL9</accession>
<name>ADD_YERPY</name>
<comment type="function">
    <text evidence="1">Catalyzes the hydrolytic deamination of adenosine and 2-deoxyadenosine.</text>
</comment>
<comment type="catalytic activity">
    <reaction evidence="1">
        <text>adenosine + H2O + H(+) = inosine + NH4(+)</text>
        <dbReference type="Rhea" id="RHEA:24408"/>
        <dbReference type="ChEBI" id="CHEBI:15377"/>
        <dbReference type="ChEBI" id="CHEBI:15378"/>
        <dbReference type="ChEBI" id="CHEBI:16335"/>
        <dbReference type="ChEBI" id="CHEBI:17596"/>
        <dbReference type="ChEBI" id="CHEBI:28938"/>
        <dbReference type="EC" id="3.5.4.4"/>
    </reaction>
    <physiologicalReaction direction="left-to-right" evidence="1">
        <dbReference type="Rhea" id="RHEA:24409"/>
    </physiologicalReaction>
</comment>
<comment type="catalytic activity">
    <reaction evidence="1">
        <text>2'-deoxyadenosine + H2O + H(+) = 2'-deoxyinosine + NH4(+)</text>
        <dbReference type="Rhea" id="RHEA:28190"/>
        <dbReference type="ChEBI" id="CHEBI:15377"/>
        <dbReference type="ChEBI" id="CHEBI:15378"/>
        <dbReference type="ChEBI" id="CHEBI:17256"/>
        <dbReference type="ChEBI" id="CHEBI:28938"/>
        <dbReference type="ChEBI" id="CHEBI:28997"/>
        <dbReference type="EC" id="3.5.4.4"/>
    </reaction>
    <physiologicalReaction direction="left-to-right" evidence="1">
        <dbReference type="Rhea" id="RHEA:28191"/>
    </physiologicalReaction>
</comment>
<comment type="cofactor">
    <cofactor evidence="1">
        <name>Zn(2+)</name>
        <dbReference type="ChEBI" id="CHEBI:29105"/>
    </cofactor>
    <text evidence="1">Binds 1 zinc ion per subunit.</text>
</comment>
<comment type="similarity">
    <text evidence="1">Belongs to the metallo-dependent hydrolases superfamily. Adenosine and AMP deaminases family. Adenosine deaminase subfamily.</text>
</comment>
<reference key="1">
    <citation type="submission" date="2008-02" db="EMBL/GenBank/DDBJ databases">
        <title>Complete sequence of Yersinia pseudotuberculosis YPIII.</title>
        <authorList>
            <consortium name="US DOE Joint Genome Institute"/>
            <person name="Copeland A."/>
            <person name="Lucas S."/>
            <person name="Lapidus A."/>
            <person name="Glavina del Rio T."/>
            <person name="Dalin E."/>
            <person name="Tice H."/>
            <person name="Bruce D."/>
            <person name="Goodwin L."/>
            <person name="Pitluck S."/>
            <person name="Munk A.C."/>
            <person name="Brettin T."/>
            <person name="Detter J.C."/>
            <person name="Han C."/>
            <person name="Tapia R."/>
            <person name="Schmutz J."/>
            <person name="Larimer F."/>
            <person name="Land M."/>
            <person name="Hauser L."/>
            <person name="Challacombe J.F."/>
            <person name="Green L."/>
            <person name="Lindler L.E."/>
            <person name="Nikolich M.P."/>
            <person name="Richardson P."/>
        </authorList>
    </citation>
    <scope>NUCLEOTIDE SEQUENCE [LARGE SCALE GENOMIC DNA]</scope>
    <source>
        <strain>YPIII</strain>
    </source>
</reference>